<protein>
    <recommendedName>
        <fullName>BTB/POZ domain-containing adapter for CUL3-mediated RhoA degradation protein 1</fullName>
    </recommendedName>
    <alternativeName>
        <fullName>BTB/POZ domain-containing protein KCTD13</fullName>
    </alternativeName>
    <alternativeName>
        <fullName>Polymerase delta-interacting protein 1</fullName>
    </alternativeName>
</protein>
<evidence type="ECO:0000250" key="1">
    <source>
        <dbReference type="UniProtKB" id="Q8WZ19"/>
    </source>
</evidence>
<evidence type="ECO:0000255" key="2">
    <source>
        <dbReference type="PROSITE-ProRule" id="PRU00037"/>
    </source>
</evidence>
<evidence type="ECO:0000256" key="3">
    <source>
        <dbReference type="SAM" id="MobiDB-lite"/>
    </source>
</evidence>
<evidence type="ECO:0000269" key="4">
    <source>
    </source>
</evidence>
<evidence type="ECO:0000269" key="5">
    <source>
    </source>
</evidence>
<evidence type="ECO:0000269" key="6">
    <source ref="1"/>
</evidence>
<evidence type="ECO:0000305" key="7"/>
<gene>
    <name type="primary">Kctd13</name>
    <name type="synonym">Poldip1</name>
</gene>
<accession>Q8BGV7</accession>
<accession>Q6AXE9</accession>
<name>BACD1_MOUSE</name>
<keyword id="KW-0539">Nucleus</keyword>
<keyword id="KW-1185">Reference proteome</keyword>
<keyword id="KW-0833">Ubl conjugation pathway</keyword>
<organism>
    <name type="scientific">Mus musculus</name>
    <name type="common">Mouse</name>
    <dbReference type="NCBI Taxonomy" id="10090"/>
    <lineage>
        <taxon>Eukaryota</taxon>
        <taxon>Metazoa</taxon>
        <taxon>Chordata</taxon>
        <taxon>Craniata</taxon>
        <taxon>Vertebrata</taxon>
        <taxon>Euteleostomi</taxon>
        <taxon>Mammalia</taxon>
        <taxon>Eutheria</taxon>
        <taxon>Euarchontoglires</taxon>
        <taxon>Glires</taxon>
        <taxon>Rodentia</taxon>
        <taxon>Myomorpha</taxon>
        <taxon>Muroidea</taxon>
        <taxon>Muridae</taxon>
        <taxon>Murinae</taxon>
        <taxon>Mus</taxon>
        <taxon>Mus</taxon>
    </lineage>
</organism>
<sequence length="329" mass="36442">MSAEASGPAPAAAECLESPSPSSVEPGSPSYSLKPLTPNSKYVKLNVGGSLHYTTLRTLTGQDTMLKAMFSGRVEVLTDAGGWVLIDRSGRHFGTILNYLRDGSVPLPESARELGELLGEARYYLVQGLIEDCQLALQQKREKLSPLCLIPTVTSPREEQQLLASTSKPVVKLLHNRSNNKYSYTSTSDDNLLKNIELFDKLALRFHGRLLFLKDVLGDEICCWSFYGQGRKIAEVCCTSIVYATEKKQTKVEFPEARIFEETLNILIYENSRGPDLALLEATGGAAGGGGAGRGDDEENREHRVRRIHVRRHITHDERPHGQQIVFKD</sequence>
<comment type="function">
    <text evidence="5">Substrate-specific adapter of a BCR (BTB-CUL3-RBX1) E3 ubiquitin-protein ligase complex required for synaptic transmission (PubMed:29088697). The BCR(KCTD13) E3 ubiquitin ligase complex mediates the ubiquitination of RHOA, leading to its degradation by the proteasome, thereby regulating the actin cytoskeleton and promoting synaptic transmission (PubMed:29088697).</text>
</comment>
<comment type="pathway">
    <text evidence="1">Protein modification; protein ubiquitination.</text>
</comment>
<comment type="subunit">
    <text evidence="1">Homotetramer; forms a two-fold symmetric tetramer in solution. Interacts with CUL3; interaction is direct and forms a 5:5 heterodecamer. Component of the BCR(KCTD13) E3 ubiquitin ligase complex, at least composed of CUL3, KCTD13/BACURD1 and RBX1. Interacts with RHOA; with a preference for RhoA-GDP. Interacts with POLD2 and PCNA. Interacts with SPRTN.</text>
</comment>
<comment type="subcellular location">
    <subcellularLocation>
        <location evidence="1">Nucleus</location>
    </subcellularLocation>
</comment>
<comment type="induction">
    <text evidence="6">By TNF-alpha.</text>
</comment>
<comment type="disruption phenotype">
    <text evidence="5">Reduced synaptic transmission in area CA1 of the hippocampus caused by increased levels of RHOA. Brain size or neural progenitor cell proliferation are not affected.</text>
</comment>
<comment type="similarity">
    <text evidence="7">Belongs to the BACURD family.</text>
</comment>
<comment type="caution">
    <text evidence="4 5">Down-regulation of Kctd13 was initially reported to cause macrocephaly due to increased proliferation (PubMed:22596160). However, it was later shown that deletion of Kctd13 does not cause any change in brain size, embryonic cell proliferation, neurogenesis, or cortical layering/migration (PubMed:29088697). Experimental conditions used may explain discrepancies. A possible explanation being that shRNAs used in the first study, may have affected off-targets.</text>
</comment>
<dbReference type="EMBL" id="AF534881">
    <property type="protein sequence ID" value="AAO16177.1"/>
    <property type="molecule type" value="mRNA"/>
</dbReference>
<dbReference type="EMBL" id="AK075722">
    <property type="protein sequence ID" value="BAC35910.1"/>
    <property type="molecule type" value="mRNA"/>
</dbReference>
<dbReference type="EMBL" id="BC079607">
    <property type="protein sequence ID" value="AAH79607.1"/>
    <property type="molecule type" value="mRNA"/>
</dbReference>
<dbReference type="CCDS" id="CCDS21851.1"/>
<dbReference type="RefSeq" id="NP_766335.1">
    <property type="nucleotide sequence ID" value="NM_172747.2"/>
</dbReference>
<dbReference type="SMR" id="Q8BGV7"/>
<dbReference type="BioGRID" id="231463">
    <property type="interactions" value="1449"/>
</dbReference>
<dbReference type="FunCoup" id="Q8BGV7">
    <property type="interactions" value="429"/>
</dbReference>
<dbReference type="IntAct" id="Q8BGV7">
    <property type="interactions" value="1"/>
</dbReference>
<dbReference type="STRING" id="10090.ENSMUSP00000032924"/>
<dbReference type="PhosphoSitePlus" id="Q8BGV7"/>
<dbReference type="PaxDb" id="10090-ENSMUSP00000032924"/>
<dbReference type="ProteomicsDB" id="277172"/>
<dbReference type="Antibodypedia" id="13396">
    <property type="antibodies" value="149 antibodies from 17 providers"/>
</dbReference>
<dbReference type="DNASU" id="233877"/>
<dbReference type="Ensembl" id="ENSMUST00000032924.6">
    <property type="protein sequence ID" value="ENSMUSP00000032924.6"/>
    <property type="gene ID" value="ENSMUSG00000030685.6"/>
</dbReference>
<dbReference type="GeneID" id="233877"/>
<dbReference type="KEGG" id="mmu:233877"/>
<dbReference type="UCSC" id="uc009jtm.1">
    <property type="organism name" value="mouse"/>
</dbReference>
<dbReference type="AGR" id="MGI:1923739"/>
<dbReference type="CTD" id="253980"/>
<dbReference type="MGI" id="MGI:1923739">
    <property type="gene designation" value="Kctd13"/>
</dbReference>
<dbReference type="VEuPathDB" id="HostDB:ENSMUSG00000030685"/>
<dbReference type="eggNOG" id="KOG2716">
    <property type="taxonomic scope" value="Eukaryota"/>
</dbReference>
<dbReference type="GeneTree" id="ENSGT00950000183143"/>
<dbReference type="HOGENOM" id="CLU_060008_0_0_1"/>
<dbReference type="InParanoid" id="Q8BGV7"/>
<dbReference type="OMA" id="FDPLCHI"/>
<dbReference type="OrthoDB" id="2333377at2759"/>
<dbReference type="PhylomeDB" id="Q8BGV7"/>
<dbReference type="TreeFam" id="TF315649"/>
<dbReference type="Reactome" id="R-MMU-9696264">
    <property type="pathway name" value="RND3 GTPase cycle"/>
</dbReference>
<dbReference type="Reactome" id="R-MMU-9696270">
    <property type="pathway name" value="RND2 GTPase cycle"/>
</dbReference>
<dbReference type="UniPathway" id="UPA00143"/>
<dbReference type="BioGRID-ORCS" id="233877">
    <property type="hits" value="2 hits in 80 CRISPR screens"/>
</dbReference>
<dbReference type="ChiTaRS" id="Kctd13">
    <property type="organism name" value="mouse"/>
</dbReference>
<dbReference type="PRO" id="PR:Q8BGV7"/>
<dbReference type="Proteomes" id="UP000000589">
    <property type="component" value="Chromosome 7"/>
</dbReference>
<dbReference type="RNAct" id="Q8BGV7">
    <property type="molecule type" value="protein"/>
</dbReference>
<dbReference type="Bgee" id="ENSMUSG00000030685">
    <property type="expression patterns" value="Expressed in primary visual cortex and 176 other cell types or tissues"/>
</dbReference>
<dbReference type="GO" id="GO:0031463">
    <property type="term" value="C:Cul3-RING ubiquitin ligase complex"/>
    <property type="evidence" value="ECO:0000250"/>
    <property type="project" value="UniProtKB"/>
</dbReference>
<dbReference type="GO" id="GO:0016604">
    <property type="term" value="C:nuclear body"/>
    <property type="evidence" value="ECO:0007669"/>
    <property type="project" value="Ensembl"/>
</dbReference>
<dbReference type="GO" id="GO:0042802">
    <property type="term" value="F:identical protein binding"/>
    <property type="evidence" value="ECO:0000353"/>
    <property type="project" value="MGI"/>
</dbReference>
<dbReference type="GO" id="GO:0019904">
    <property type="term" value="F:protein domain specific binding"/>
    <property type="evidence" value="ECO:0007669"/>
    <property type="project" value="Ensembl"/>
</dbReference>
<dbReference type="GO" id="GO:0031267">
    <property type="term" value="F:small GTPase binding"/>
    <property type="evidence" value="ECO:0000250"/>
    <property type="project" value="UniProtKB"/>
</dbReference>
<dbReference type="GO" id="GO:0004842">
    <property type="term" value="F:ubiquitin-protein transferase activity"/>
    <property type="evidence" value="ECO:0007669"/>
    <property type="project" value="Ensembl"/>
</dbReference>
<dbReference type="GO" id="GO:0016477">
    <property type="term" value="P:cell migration"/>
    <property type="evidence" value="ECO:0000250"/>
    <property type="project" value="UniProtKB"/>
</dbReference>
<dbReference type="GO" id="GO:0035024">
    <property type="term" value="P:negative regulation of Rho protein signal transduction"/>
    <property type="evidence" value="ECO:0000315"/>
    <property type="project" value="UniProtKB"/>
</dbReference>
<dbReference type="GO" id="GO:0045740">
    <property type="term" value="P:positive regulation of DNA replication"/>
    <property type="evidence" value="ECO:0007669"/>
    <property type="project" value="Ensembl"/>
</dbReference>
<dbReference type="GO" id="GO:0050806">
    <property type="term" value="P:positive regulation of synaptic transmission"/>
    <property type="evidence" value="ECO:0000315"/>
    <property type="project" value="UniProtKB"/>
</dbReference>
<dbReference type="GO" id="GO:0043161">
    <property type="term" value="P:proteasome-mediated ubiquitin-dependent protein catabolic process"/>
    <property type="evidence" value="ECO:0000250"/>
    <property type="project" value="UniProtKB"/>
</dbReference>
<dbReference type="GO" id="GO:0051260">
    <property type="term" value="P:protein homooligomerization"/>
    <property type="evidence" value="ECO:0007669"/>
    <property type="project" value="InterPro"/>
</dbReference>
<dbReference type="GO" id="GO:0016567">
    <property type="term" value="P:protein ubiquitination"/>
    <property type="evidence" value="ECO:0000250"/>
    <property type="project" value="UniProtKB"/>
</dbReference>
<dbReference type="GO" id="GO:0043149">
    <property type="term" value="P:stress fiber assembly"/>
    <property type="evidence" value="ECO:0000250"/>
    <property type="project" value="UniProtKB"/>
</dbReference>
<dbReference type="CDD" id="cd18400">
    <property type="entry name" value="BTB_POZ_KCTD13_BACURD1"/>
    <property type="match status" value="1"/>
</dbReference>
<dbReference type="FunFam" id="3.30.710.10:FF:000013">
    <property type="entry name" value="BTB/POZ domain-containing adapter for CUL3-mediated RhoA degradation protein 3"/>
    <property type="match status" value="1"/>
</dbReference>
<dbReference type="Gene3D" id="3.30.710.10">
    <property type="entry name" value="Potassium Channel Kv1.1, Chain A"/>
    <property type="match status" value="1"/>
</dbReference>
<dbReference type="InterPro" id="IPR045068">
    <property type="entry name" value="BACURD1-3"/>
</dbReference>
<dbReference type="InterPro" id="IPR000210">
    <property type="entry name" value="BTB/POZ_dom"/>
</dbReference>
<dbReference type="InterPro" id="IPR011333">
    <property type="entry name" value="SKP1/BTB/POZ_sf"/>
</dbReference>
<dbReference type="InterPro" id="IPR003131">
    <property type="entry name" value="T1-type_BTB"/>
</dbReference>
<dbReference type="PANTHER" id="PTHR11145">
    <property type="entry name" value="BTB/POZ DOMAIN-CONTAINING ADAPTER FOR CUL3-MEDIATED RHOA DEGRADATION PROTEIN FAMILY MEMBER"/>
    <property type="match status" value="1"/>
</dbReference>
<dbReference type="PANTHER" id="PTHR11145:SF18">
    <property type="entry name" value="BTB_POZ DOMAIN-CONTAINING ADAPTER FOR CUL3-MEDIATED RHOA DEGRADATION PROTEIN 1"/>
    <property type="match status" value="1"/>
</dbReference>
<dbReference type="Pfam" id="PF02214">
    <property type="entry name" value="BTB_2"/>
    <property type="match status" value="1"/>
</dbReference>
<dbReference type="SMART" id="SM00225">
    <property type="entry name" value="BTB"/>
    <property type="match status" value="1"/>
</dbReference>
<dbReference type="SUPFAM" id="SSF54695">
    <property type="entry name" value="POZ domain"/>
    <property type="match status" value="1"/>
</dbReference>
<dbReference type="PROSITE" id="PS50097">
    <property type="entry name" value="BTB"/>
    <property type="match status" value="1"/>
</dbReference>
<feature type="chain" id="PRO_0000191298" description="BTB/POZ domain-containing adapter for CUL3-mediated RhoA degradation protein 1">
    <location>
        <begin position="1"/>
        <end position="329"/>
    </location>
</feature>
<feature type="domain" description="BTB" evidence="2">
    <location>
        <begin position="41"/>
        <end position="109"/>
    </location>
</feature>
<feature type="region of interest" description="Disordered" evidence="3">
    <location>
        <begin position="1"/>
        <end position="31"/>
    </location>
</feature>
<reference key="1">
    <citation type="submission" date="2002-08" db="EMBL/GenBank/DDBJ databases">
        <title>A tumor necrosis factor alpha-inducible protein.</title>
        <authorList>
            <person name="Zhou J."/>
            <person name="Hu X."/>
            <person name="Zhang J."/>
        </authorList>
    </citation>
    <scope>NUCLEOTIDE SEQUENCE [MRNA]</scope>
    <scope>INDUCTION</scope>
    <source>
        <strain>KM</strain>
        <tissue>Brain</tissue>
    </source>
</reference>
<reference key="2">
    <citation type="journal article" date="2005" name="Science">
        <title>The transcriptional landscape of the mammalian genome.</title>
        <authorList>
            <person name="Carninci P."/>
            <person name="Kasukawa T."/>
            <person name="Katayama S."/>
            <person name="Gough J."/>
            <person name="Frith M.C."/>
            <person name="Maeda N."/>
            <person name="Oyama R."/>
            <person name="Ravasi T."/>
            <person name="Lenhard B."/>
            <person name="Wells C."/>
            <person name="Kodzius R."/>
            <person name="Shimokawa K."/>
            <person name="Bajic V.B."/>
            <person name="Brenner S.E."/>
            <person name="Batalov S."/>
            <person name="Forrest A.R."/>
            <person name="Zavolan M."/>
            <person name="Davis M.J."/>
            <person name="Wilming L.G."/>
            <person name="Aidinis V."/>
            <person name="Allen J.E."/>
            <person name="Ambesi-Impiombato A."/>
            <person name="Apweiler R."/>
            <person name="Aturaliya R.N."/>
            <person name="Bailey T.L."/>
            <person name="Bansal M."/>
            <person name="Baxter L."/>
            <person name="Beisel K.W."/>
            <person name="Bersano T."/>
            <person name="Bono H."/>
            <person name="Chalk A.M."/>
            <person name="Chiu K.P."/>
            <person name="Choudhary V."/>
            <person name="Christoffels A."/>
            <person name="Clutterbuck D.R."/>
            <person name="Crowe M.L."/>
            <person name="Dalla E."/>
            <person name="Dalrymple B.P."/>
            <person name="de Bono B."/>
            <person name="Della Gatta G."/>
            <person name="di Bernardo D."/>
            <person name="Down T."/>
            <person name="Engstrom P."/>
            <person name="Fagiolini M."/>
            <person name="Faulkner G."/>
            <person name="Fletcher C.F."/>
            <person name="Fukushima T."/>
            <person name="Furuno M."/>
            <person name="Futaki S."/>
            <person name="Gariboldi M."/>
            <person name="Georgii-Hemming P."/>
            <person name="Gingeras T.R."/>
            <person name="Gojobori T."/>
            <person name="Green R.E."/>
            <person name="Gustincich S."/>
            <person name="Harbers M."/>
            <person name="Hayashi Y."/>
            <person name="Hensch T.K."/>
            <person name="Hirokawa N."/>
            <person name="Hill D."/>
            <person name="Huminiecki L."/>
            <person name="Iacono M."/>
            <person name="Ikeo K."/>
            <person name="Iwama A."/>
            <person name="Ishikawa T."/>
            <person name="Jakt M."/>
            <person name="Kanapin A."/>
            <person name="Katoh M."/>
            <person name="Kawasawa Y."/>
            <person name="Kelso J."/>
            <person name="Kitamura H."/>
            <person name="Kitano H."/>
            <person name="Kollias G."/>
            <person name="Krishnan S.P."/>
            <person name="Kruger A."/>
            <person name="Kummerfeld S.K."/>
            <person name="Kurochkin I.V."/>
            <person name="Lareau L.F."/>
            <person name="Lazarevic D."/>
            <person name="Lipovich L."/>
            <person name="Liu J."/>
            <person name="Liuni S."/>
            <person name="McWilliam S."/>
            <person name="Madan Babu M."/>
            <person name="Madera M."/>
            <person name="Marchionni L."/>
            <person name="Matsuda H."/>
            <person name="Matsuzawa S."/>
            <person name="Miki H."/>
            <person name="Mignone F."/>
            <person name="Miyake S."/>
            <person name="Morris K."/>
            <person name="Mottagui-Tabar S."/>
            <person name="Mulder N."/>
            <person name="Nakano N."/>
            <person name="Nakauchi H."/>
            <person name="Ng P."/>
            <person name="Nilsson R."/>
            <person name="Nishiguchi S."/>
            <person name="Nishikawa S."/>
            <person name="Nori F."/>
            <person name="Ohara O."/>
            <person name="Okazaki Y."/>
            <person name="Orlando V."/>
            <person name="Pang K.C."/>
            <person name="Pavan W.J."/>
            <person name="Pavesi G."/>
            <person name="Pesole G."/>
            <person name="Petrovsky N."/>
            <person name="Piazza S."/>
            <person name="Reed J."/>
            <person name="Reid J.F."/>
            <person name="Ring B.Z."/>
            <person name="Ringwald M."/>
            <person name="Rost B."/>
            <person name="Ruan Y."/>
            <person name="Salzberg S.L."/>
            <person name="Sandelin A."/>
            <person name="Schneider C."/>
            <person name="Schoenbach C."/>
            <person name="Sekiguchi K."/>
            <person name="Semple C.A."/>
            <person name="Seno S."/>
            <person name="Sessa L."/>
            <person name="Sheng Y."/>
            <person name="Shibata Y."/>
            <person name="Shimada H."/>
            <person name="Shimada K."/>
            <person name="Silva D."/>
            <person name="Sinclair B."/>
            <person name="Sperling S."/>
            <person name="Stupka E."/>
            <person name="Sugiura K."/>
            <person name="Sultana R."/>
            <person name="Takenaka Y."/>
            <person name="Taki K."/>
            <person name="Tammoja K."/>
            <person name="Tan S.L."/>
            <person name="Tang S."/>
            <person name="Taylor M.S."/>
            <person name="Tegner J."/>
            <person name="Teichmann S.A."/>
            <person name="Ueda H.R."/>
            <person name="van Nimwegen E."/>
            <person name="Verardo R."/>
            <person name="Wei C.L."/>
            <person name="Yagi K."/>
            <person name="Yamanishi H."/>
            <person name="Zabarovsky E."/>
            <person name="Zhu S."/>
            <person name="Zimmer A."/>
            <person name="Hide W."/>
            <person name="Bult C."/>
            <person name="Grimmond S.M."/>
            <person name="Teasdale R.D."/>
            <person name="Liu E.T."/>
            <person name="Brusic V."/>
            <person name="Quackenbush J."/>
            <person name="Wahlestedt C."/>
            <person name="Mattick J.S."/>
            <person name="Hume D.A."/>
            <person name="Kai C."/>
            <person name="Sasaki D."/>
            <person name="Tomaru Y."/>
            <person name="Fukuda S."/>
            <person name="Kanamori-Katayama M."/>
            <person name="Suzuki M."/>
            <person name="Aoki J."/>
            <person name="Arakawa T."/>
            <person name="Iida J."/>
            <person name="Imamura K."/>
            <person name="Itoh M."/>
            <person name="Kato T."/>
            <person name="Kawaji H."/>
            <person name="Kawagashira N."/>
            <person name="Kawashima T."/>
            <person name="Kojima M."/>
            <person name="Kondo S."/>
            <person name="Konno H."/>
            <person name="Nakano K."/>
            <person name="Ninomiya N."/>
            <person name="Nishio T."/>
            <person name="Okada M."/>
            <person name="Plessy C."/>
            <person name="Shibata K."/>
            <person name="Shiraki T."/>
            <person name="Suzuki S."/>
            <person name="Tagami M."/>
            <person name="Waki K."/>
            <person name="Watahiki A."/>
            <person name="Okamura-Oho Y."/>
            <person name="Suzuki H."/>
            <person name="Kawai J."/>
            <person name="Hayashizaki Y."/>
        </authorList>
    </citation>
    <scope>NUCLEOTIDE SEQUENCE [LARGE SCALE MRNA]</scope>
    <source>
        <strain>C57BL/6J</strain>
        <tissue>Cerebellum</tissue>
    </source>
</reference>
<reference key="3">
    <citation type="journal article" date="2004" name="Genome Res.">
        <title>The status, quality, and expansion of the NIH full-length cDNA project: the Mammalian Gene Collection (MGC).</title>
        <authorList>
            <consortium name="The MGC Project Team"/>
        </authorList>
    </citation>
    <scope>NUCLEOTIDE SEQUENCE [LARGE SCALE MRNA]</scope>
    <source>
        <strain>C57BL/6J</strain>
        <tissue>Brain</tissue>
    </source>
</reference>
<reference key="4">
    <citation type="journal article" date="2012" name="Nature">
        <title>KCTD13 is a major driver of mirrored neuroanatomical phenotypes of the 16p11.2 copy number variant.</title>
        <authorList>
            <person name="Golzio C."/>
            <person name="Willer J."/>
            <person name="Talkowski M.E."/>
            <person name="Oh E.C."/>
            <person name="Taniguchi Y."/>
            <person name="Jacquemont S."/>
            <person name="Reymond A."/>
            <person name="Sun M."/>
            <person name="Sawa A."/>
            <person name="Gusella J.F."/>
            <person name="Kamiya A."/>
            <person name="Beckmann J.S."/>
            <person name="Katsanis N."/>
        </authorList>
    </citation>
    <scope>CAUTION</scope>
</reference>
<reference key="5">
    <citation type="journal article" date="2017" name="Nature">
        <title>Kctd13 deletion reduces synaptic transmission via increased RhoA.</title>
        <authorList>
            <person name="Escamilla C.O."/>
            <person name="Filonova I."/>
            <person name="Walker A.K."/>
            <person name="Xuan Z.X."/>
            <person name="Holehonnur R."/>
            <person name="Espinosa F."/>
            <person name="Liu S."/>
            <person name="Thyme S.B."/>
            <person name="Lopez-Garcia I.A."/>
            <person name="Mendoza D.B."/>
            <person name="Usui N."/>
            <person name="Ellegood J."/>
            <person name="Eisch A.J."/>
            <person name="Konopka G."/>
            <person name="Lerch J.P."/>
            <person name="Schier A.F."/>
            <person name="Speed H.E."/>
            <person name="Powell C.M."/>
        </authorList>
    </citation>
    <scope>FUNCTION</scope>
    <scope>DISRUPTION PHENOTYPE</scope>
</reference>
<proteinExistence type="evidence at transcript level"/>